<comment type="function">
    <text evidence="1">Major nitrogen regulatory protein. Positively acting regulatory gene of nitrogen metabolite repression (By similarity).</text>
</comment>
<comment type="subcellular location">
    <subcellularLocation>
        <location>Nucleus</location>
    </subcellularLocation>
</comment>
<accession>P78688</accession>
<keyword id="KW-0010">Activator</keyword>
<keyword id="KW-0238">DNA-binding</keyword>
<keyword id="KW-0479">Metal-binding</keyword>
<keyword id="KW-0534">Nitrate assimilation</keyword>
<keyword id="KW-0539">Nucleus</keyword>
<keyword id="KW-0804">Transcription</keyword>
<keyword id="KW-0805">Transcription regulation</keyword>
<keyword id="KW-0862">Zinc</keyword>
<keyword id="KW-0863">Zinc-finger</keyword>
<organism>
    <name type="scientific">Fusarium fujikuroi</name>
    <name type="common">Bakanae and foot rot disease fungus</name>
    <name type="synonym">Gibberella fujikuroi</name>
    <dbReference type="NCBI Taxonomy" id="5127"/>
    <lineage>
        <taxon>Eukaryota</taxon>
        <taxon>Fungi</taxon>
        <taxon>Dikarya</taxon>
        <taxon>Ascomycota</taxon>
        <taxon>Pezizomycotina</taxon>
        <taxon>Sordariomycetes</taxon>
        <taxon>Hypocreomycetidae</taxon>
        <taxon>Hypocreales</taxon>
        <taxon>Nectriaceae</taxon>
        <taxon>Fusarium</taxon>
        <taxon>Fusarium fujikuroi species complex</taxon>
    </lineage>
</organism>
<gene>
    <name type="primary">AREA</name>
</gene>
<evidence type="ECO:0000250" key="1"/>
<evidence type="ECO:0000255" key="2">
    <source>
        <dbReference type="PROSITE-ProRule" id="PRU00094"/>
    </source>
</evidence>
<evidence type="ECO:0000256" key="3">
    <source>
        <dbReference type="SAM" id="MobiDB-lite"/>
    </source>
</evidence>
<reference key="1">
    <citation type="journal article" date="1999" name="Mol. Gen. Genet.">
        <title>Isolation, characterization and disruption of the areA nitrogen regulatory gene of Gibberella fujikuroi.</title>
        <authorList>
            <person name="Tudzynski B."/>
            <person name="Homann V."/>
            <person name="Feng B."/>
            <person name="Marzluf G.A."/>
        </authorList>
    </citation>
    <scope>NUCLEOTIDE SEQUENCE [GENOMIC DNA]</scope>
    <source>
        <strain>m567</strain>
    </source>
</reference>
<proteinExistence type="inferred from homology"/>
<protein>
    <recommendedName>
        <fullName>Nitrogen regulatory protein areA</fullName>
    </recommendedName>
</protein>
<sequence>MSTSVSIATSSPVLTMNPIITEHDFRFPRRPSAWPGAAIHNAPTQRTXNSNRIPNSRDASASFKEHKTDMATTYSLARQGLGGSALFPFLQNGLADSDRSIDRMQQDDPLATQVWKFFARTKHQLPSQHRMENLTWRMMALNIRRHKEEQQQRQDEADARRKKNMDAGSRAFRLGRPMMQSSPSGIAQLRKSSENNLAQPDAMNLDDFIFSDNSGSPINFASPEGDKMVDDRSGSSMASAIPIKSRKEPSLQNFVPQSVPVQPAHQATQGSEFNYVNRHLRKTSIDDRRTRKRPANFSPQVPAVNSTAAQNDLDLDSELHDYSLDQPNQAGIPQQSNGSNVPFNIDTFMENDSMVNNGNFQQNFSFSPSTSPMIPHGPFSGMYHNSSVPSASMSNNNNNSDFYSPPASAYPSNVSTPHPVPEQEGFYFGSQDARTQRPQGFQQSIGSMLSQQFMYGGSNGNSGSTMFSAPGTASESMSAYSTAPSSFGHIDPSQVFQNEQAVTSPTIQMPQDNMFSFGADSDDEDNNAFADRNVSMQKDMSSSLDESGAMGWDASLPGQFSTQAARFPGGPTRKQVMIGGTTTDFVDNNGDWESNGLERSQSQSFRGGNLRRQHPKLPRNASTPVHFGGQQNGFEQLAQSMQSSPAGDGNGTMSGFSSVAPSRPSSPPMSKQGSTTNLQAAAGNGNDGNAPTTCTNCFTQTTPLWRRNPEGQPLCNACGLFLKLHGVVRPLSLKTDVIKKRNRGSGTNVPVGGSSTRSKKTASTLNSRKNSTLSMSTATANSTKPNSSNPTPRVTTPPATSQPPSSKDVDSPVSGTTSGANTAGSTPNSHFGGPGPSSGAVGGKGVVPIAAAPPKTSPGPGASSMSMQRPATASSKRQRRHSKSIGGDVPVSMDIDSPDSTSSIDGPRPFGSSAGLSSLPGGMSASSFNLNQRPSTLGSATGMISMSGGQTSSLIGSSAGPQEWEWLTMSL</sequence>
<name>AREA_FUSFU</name>
<dbReference type="EMBL" id="Y11006">
    <property type="protein sequence ID" value="CAA71897.1"/>
    <property type="molecule type" value="Genomic_DNA"/>
</dbReference>
<dbReference type="eggNOG" id="KOG1601">
    <property type="taxonomic scope" value="Eukaryota"/>
</dbReference>
<dbReference type="GO" id="GO:0005634">
    <property type="term" value="C:nucleus"/>
    <property type="evidence" value="ECO:0007669"/>
    <property type="project" value="UniProtKB-SubCell"/>
</dbReference>
<dbReference type="GO" id="GO:0000981">
    <property type="term" value="F:DNA-binding transcription factor activity, RNA polymerase II-specific"/>
    <property type="evidence" value="ECO:0007669"/>
    <property type="project" value="TreeGrafter"/>
</dbReference>
<dbReference type="GO" id="GO:0000978">
    <property type="term" value="F:RNA polymerase II cis-regulatory region sequence-specific DNA binding"/>
    <property type="evidence" value="ECO:0007669"/>
    <property type="project" value="TreeGrafter"/>
</dbReference>
<dbReference type="GO" id="GO:0008270">
    <property type="term" value="F:zinc ion binding"/>
    <property type="evidence" value="ECO:0007669"/>
    <property type="project" value="UniProtKB-KW"/>
</dbReference>
<dbReference type="GO" id="GO:0000122">
    <property type="term" value="P:negative regulation of transcription by RNA polymerase II"/>
    <property type="evidence" value="ECO:0007669"/>
    <property type="project" value="TreeGrafter"/>
</dbReference>
<dbReference type="GO" id="GO:0042128">
    <property type="term" value="P:nitrate assimilation"/>
    <property type="evidence" value="ECO:0007669"/>
    <property type="project" value="UniProtKB-KW"/>
</dbReference>
<dbReference type="GO" id="GO:0045944">
    <property type="term" value="P:positive regulation of transcription by RNA polymerase II"/>
    <property type="evidence" value="ECO:0007669"/>
    <property type="project" value="TreeGrafter"/>
</dbReference>
<dbReference type="CDD" id="cd00202">
    <property type="entry name" value="ZnF_GATA"/>
    <property type="match status" value="1"/>
</dbReference>
<dbReference type="FunFam" id="3.30.50.10:FF:000007">
    <property type="entry name" value="Nitrogen regulatory AreA, N-terminal"/>
    <property type="match status" value="1"/>
</dbReference>
<dbReference type="Gene3D" id="3.30.50.10">
    <property type="entry name" value="Erythroid Transcription Factor GATA-1, subunit A"/>
    <property type="match status" value="1"/>
</dbReference>
<dbReference type="InterPro" id="IPR013860">
    <property type="entry name" value="AreA_GATA"/>
</dbReference>
<dbReference type="InterPro" id="IPR039355">
    <property type="entry name" value="Transcription_factor_GATA"/>
</dbReference>
<dbReference type="InterPro" id="IPR000679">
    <property type="entry name" value="Znf_GATA"/>
</dbReference>
<dbReference type="InterPro" id="IPR013088">
    <property type="entry name" value="Znf_NHR/GATA"/>
</dbReference>
<dbReference type="PANTHER" id="PTHR10071:SF281">
    <property type="entry name" value="BOX A-BINDING FACTOR-RELATED"/>
    <property type="match status" value="1"/>
</dbReference>
<dbReference type="PANTHER" id="PTHR10071">
    <property type="entry name" value="TRANSCRIPTION FACTOR GATA FAMILY MEMBER"/>
    <property type="match status" value="1"/>
</dbReference>
<dbReference type="Pfam" id="PF00320">
    <property type="entry name" value="GATA"/>
    <property type="match status" value="1"/>
</dbReference>
<dbReference type="Pfam" id="PF08550">
    <property type="entry name" value="GATA_AreA"/>
    <property type="match status" value="1"/>
</dbReference>
<dbReference type="PRINTS" id="PR00619">
    <property type="entry name" value="GATAZNFINGER"/>
</dbReference>
<dbReference type="SMART" id="SM00401">
    <property type="entry name" value="ZnF_GATA"/>
    <property type="match status" value="1"/>
</dbReference>
<dbReference type="SUPFAM" id="SSF57716">
    <property type="entry name" value="Glucocorticoid receptor-like (DNA-binding domain)"/>
    <property type="match status" value="1"/>
</dbReference>
<dbReference type="PROSITE" id="PS00344">
    <property type="entry name" value="GATA_ZN_FINGER_1"/>
    <property type="match status" value="1"/>
</dbReference>
<dbReference type="PROSITE" id="PS50114">
    <property type="entry name" value="GATA_ZN_FINGER_2"/>
    <property type="match status" value="1"/>
</dbReference>
<feature type="chain" id="PRO_0000083466" description="Nitrogen regulatory protein areA">
    <location>
        <begin position="1"/>
        <end position="971"/>
    </location>
</feature>
<feature type="zinc finger region" description="GATA-type" evidence="2">
    <location>
        <begin position="694"/>
        <end position="718"/>
    </location>
</feature>
<feature type="region of interest" description="Disordered" evidence="3">
    <location>
        <begin position="39"/>
        <end position="61"/>
    </location>
</feature>
<feature type="region of interest" description="Disordered" evidence="3">
    <location>
        <begin position="146"/>
        <end position="169"/>
    </location>
</feature>
<feature type="region of interest" description="Disordered" evidence="3">
    <location>
        <begin position="262"/>
        <end position="307"/>
    </location>
</feature>
<feature type="region of interest" description="Disordered" evidence="3">
    <location>
        <begin position="390"/>
        <end position="416"/>
    </location>
</feature>
<feature type="region of interest" description="Disordered" evidence="3">
    <location>
        <begin position="587"/>
        <end position="691"/>
    </location>
</feature>
<feature type="region of interest" description="Disordered" evidence="3">
    <location>
        <begin position="742"/>
        <end position="918"/>
    </location>
</feature>
<feature type="compositionally biased region" description="Polar residues" evidence="3">
    <location>
        <begin position="42"/>
        <end position="59"/>
    </location>
</feature>
<feature type="compositionally biased region" description="Basic and acidic residues" evidence="3">
    <location>
        <begin position="146"/>
        <end position="159"/>
    </location>
</feature>
<feature type="compositionally biased region" description="Polar residues" evidence="3">
    <location>
        <begin position="262"/>
        <end position="274"/>
    </location>
</feature>
<feature type="compositionally biased region" description="Polar residues" evidence="3">
    <location>
        <begin position="297"/>
        <end position="307"/>
    </location>
</feature>
<feature type="compositionally biased region" description="Low complexity" evidence="3">
    <location>
        <begin position="390"/>
        <end position="400"/>
    </location>
</feature>
<feature type="compositionally biased region" description="Polar residues" evidence="3">
    <location>
        <begin position="597"/>
        <end position="606"/>
    </location>
</feature>
<feature type="compositionally biased region" description="Polar residues" evidence="3">
    <location>
        <begin position="632"/>
        <end position="645"/>
    </location>
</feature>
<feature type="compositionally biased region" description="Low complexity" evidence="3">
    <location>
        <begin position="654"/>
        <end position="663"/>
    </location>
</feature>
<feature type="compositionally biased region" description="Low complexity" evidence="3">
    <location>
        <begin position="680"/>
        <end position="691"/>
    </location>
</feature>
<feature type="compositionally biased region" description="Polar residues" evidence="3">
    <location>
        <begin position="744"/>
        <end position="794"/>
    </location>
</feature>
<feature type="compositionally biased region" description="Low complexity" evidence="3">
    <location>
        <begin position="796"/>
        <end position="826"/>
    </location>
</feature>
<feature type="compositionally biased region" description="Gly residues" evidence="3">
    <location>
        <begin position="832"/>
        <end position="845"/>
    </location>
</feature>
<feature type="compositionally biased region" description="Polar residues" evidence="3">
    <location>
        <begin position="863"/>
        <end position="875"/>
    </location>
</feature>
<feature type="compositionally biased region" description="Low complexity" evidence="3">
    <location>
        <begin position="892"/>
        <end position="918"/>
    </location>
</feature>